<feature type="chain" id="PRO_0000376979" description="B3 domain-containing protein Os07g0183700">
    <location>
        <begin position="1"/>
        <end position="524"/>
    </location>
</feature>
<feature type="DNA-binding region" description="TF-B3" evidence="1">
    <location>
        <begin position="336"/>
        <end position="434"/>
    </location>
</feature>
<feature type="region of interest" description="Disordered" evidence="2">
    <location>
        <begin position="94"/>
        <end position="152"/>
    </location>
</feature>
<feature type="region of interest" description="Disordered" evidence="2">
    <location>
        <begin position="191"/>
        <end position="232"/>
    </location>
</feature>
<feature type="compositionally biased region" description="Pro residues" evidence="2">
    <location>
        <begin position="100"/>
        <end position="109"/>
    </location>
</feature>
<feature type="compositionally biased region" description="Low complexity" evidence="2">
    <location>
        <begin position="110"/>
        <end position="124"/>
    </location>
</feature>
<feature type="compositionally biased region" description="Low complexity" evidence="2">
    <location>
        <begin position="200"/>
        <end position="232"/>
    </location>
</feature>
<comment type="subcellular location">
    <subcellularLocation>
        <location evidence="1">Nucleus</location>
    </subcellularLocation>
</comment>
<comment type="sequence caution" evidence="3">
    <conflict type="erroneous gene model prediction">
        <sequence resource="EMBL-CDS" id="BAC24876"/>
    </conflict>
</comment>
<comment type="sequence caution" evidence="3">
    <conflict type="erroneous gene model prediction">
        <sequence resource="EMBL-CDS" id="BAD30348"/>
    </conflict>
</comment>
<reference key="1">
    <citation type="journal article" date="2005" name="Nature">
        <title>The map-based sequence of the rice genome.</title>
        <authorList>
            <consortium name="International rice genome sequencing project (IRGSP)"/>
        </authorList>
    </citation>
    <scope>NUCLEOTIDE SEQUENCE [LARGE SCALE GENOMIC DNA]</scope>
    <source>
        <strain>cv. Nipponbare</strain>
    </source>
</reference>
<reference key="2">
    <citation type="journal article" date="2013" name="Rice">
        <title>Improvement of the Oryza sativa Nipponbare reference genome using next generation sequence and optical map data.</title>
        <authorList>
            <person name="Kawahara Y."/>
            <person name="de la Bastide M."/>
            <person name="Hamilton J.P."/>
            <person name="Kanamori H."/>
            <person name="McCombie W.R."/>
            <person name="Ouyang S."/>
            <person name="Schwartz D.C."/>
            <person name="Tanaka T."/>
            <person name="Wu J."/>
            <person name="Zhou S."/>
            <person name="Childs K.L."/>
            <person name="Davidson R.M."/>
            <person name="Lin H."/>
            <person name="Quesada-Ocampo L."/>
            <person name="Vaillancourt B."/>
            <person name="Sakai H."/>
            <person name="Lee S.S."/>
            <person name="Kim J."/>
            <person name="Numa H."/>
            <person name="Itoh T."/>
            <person name="Buell C.R."/>
            <person name="Matsumoto T."/>
        </authorList>
    </citation>
    <scope>GENOME REANNOTATION</scope>
    <source>
        <strain>cv. Nipponbare</strain>
    </source>
</reference>
<reference key="3">
    <citation type="journal article" date="2005" name="PLoS Biol.">
        <title>The genomes of Oryza sativa: a history of duplications.</title>
        <authorList>
            <person name="Yu J."/>
            <person name="Wang J."/>
            <person name="Lin W."/>
            <person name="Li S."/>
            <person name="Li H."/>
            <person name="Zhou J."/>
            <person name="Ni P."/>
            <person name="Dong W."/>
            <person name="Hu S."/>
            <person name="Zeng C."/>
            <person name="Zhang J."/>
            <person name="Zhang Y."/>
            <person name="Li R."/>
            <person name="Xu Z."/>
            <person name="Li S."/>
            <person name="Li X."/>
            <person name="Zheng H."/>
            <person name="Cong L."/>
            <person name="Lin L."/>
            <person name="Yin J."/>
            <person name="Geng J."/>
            <person name="Li G."/>
            <person name="Shi J."/>
            <person name="Liu J."/>
            <person name="Lv H."/>
            <person name="Li J."/>
            <person name="Wang J."/>
            <person name="Deng Y."/>
            <person name="Ran L."/>
            <person name="Shi X."/>
            <person name="Wang X."/>
            <person name="Wu Q."/>
            <person name="Li C."/>
            <person name="Ren X."/>
            <person name="Wang J."/>
            <person name="Wang X."/>
            <person name="Li D."/>
            <person name="Liu D."/>
            <person name="Zhang X."/>
            <person name="Ji Z."/>
            <person name="Zhao W."/>
            <person name="Sun Y."/>
            <person name="Zhang Z."/>
            <person name="Bao J."/>
            <person name="Han Y."/>
            <person name="Dong L."/>
            <person name="Ji J."/>
            <person name="Chen P."/>
            <person name="Wu S."/>
            <person name="Liu J."/>
            <person name="Xiao Y."/>
            <person name="Bu D."/>
            <person name="Tan J."/>
            <person name="Yang L."/>
            <person name="Ye C."/>
            <person name="Zhang J."/>
            <person name="Xu J."/>
            <person name="Zhou Y."/>
            <person name="Yu Y."/>
            <person name="Zhang B."/>
            <person name="Zhuang S."/>
            <person name="Wei H."/>
            <person name="Liu B."/>
            <person name="Lei M."/>
            <person name="Yu H."/>
            <person name="Li Y."/>
            <person name="Xu H."/>
            <person name="Wei S."/>
            <person name="He X."/>
            <person name="Fang L."/>
            <person name="Zhang Z."/>
            <person name="Zhang Y."/>
            <person name="Huang X."/>
            <person name="Su Z."/>
            <person name="Tong W."/>
            <person name="Li J."/>
            <person name="Tong Z."/>
            <person name="Li S."/>
            <person name="Ye J."/>
            <person name="Wang L."/>
            <person name="Fang L."/>
            <person name="Lei T."/>
            <person name="Chen C.-S."/>
            <person name="Chen H.-C."/>
            <person name="Xu Z."/>
            <person name="Li H."/>
            <person name="Huang H."/>
            <person name="Zhang F."/>
            <person name="Xu H."/>
            <person name="Li N."/>
            <person name="Zhao C."/>
            <person name="Li S."/>
            <person name="Dong L."/>
            <person name="Huang Y."/>
            <person name="Li L."/>
            <person name="Xi Y."/>
            <person name="Qi Q."/>
            <person name="Li W."/>
            <person name="Zhang B."/>
            <person name="Hu W."/>
            <person name="Zhang Y."/>
            <person name="Tian X."/>
            <person name="Jiao Y."/>
            <person name="Liang X."/>
            <person name="Jin J."/>
            <person name="Gao L."/>
            <person name="Zheng W."/>
            <person name="Hao B."/>
            <person name="Liu S.-M."/>
            <person name="Wang W."/>
            <person name="Yuan L."/>
            <person name="Cao M."/>
            <person name="McDermott J."/>
            <person name="Samudrala R."/>
            <person name="Wang J."/>
            <person name="Wong G.K.-S."/>
            <person name="Yang H."/>
        </authorList>
    </citation>
    <scope>NUCLEOTIDE SEQUENCE [LARGE SCALE GENOMIC DNA]</scope>
    <source>
        <strain>cv. Nipponbare</strain>
    </source>
</reference>
<organism>
    <name type="scientific">Oryza sativa subsp. japonica</name>
    <name type="common">Rice</name>
    <dbReference type="NCBI Taxonomy" id="39947"/>
    <lineage>
        <taxon>Eukaryota</taxon>
        <taxon>Viridiplantae</taxon>
        <taxon>Streptophyta</taxon>
        <taxon>Embryophyta</taxon>
        <taxon>Tracheophyta</taxon>
        <taxon>Spermatophyta</taxon>
        <taxon>Magnoliopsida</taxon>
        <taxon>Liliopsida</taxon>
        <taxon>Poales</taxon>
        <taxon>Poaceae</taxon>
        <taxon>BOP clade</taxon>
        <taxon>Oryzoideae</taxon>
        <taxon>Oryzeae</taxon>
        <taxon>Oryzinae</taxon>
        <taxon>Oryza</taxon>
        <taxon>Oryza sativa</taxon>
    </lineage>
</organism>
<proteinExistence type="inferred from homology"/>
<keyword id="KW-0238">DNA-binding</keyword>
<keyword id="KW-0539">Nucleus</keyword>
<keyword id="KW-1185">Reference proteome</keyword>
<keyword id="KW-0804">Transcription</keyword>
<keyword id="KW-0805">Transcription regulation</keyword>
<protein>
    <recommendedName>
        <fullName>B3 domain-containing protein Os07g0183700</fullName>
    </recommendedName>
</protein>
<accession>A3BH91</accession>
<accession>A0A0N7KN14</accession>
<accession>Q8H501</accession>
<dbReference type="EMBL" id="AP003835">
    <property type="protein sequence ID" value="BAD30348.1"/>
    <property type="status" value="ALT_SEQ"/>
    <property type="molecule type" value="Genomic_DNA"/>
</dbReference>
<dbReference type="EMBL" id="AP003861">
    <property type="protein sequence ID" value="BAC24876.1"/>
    <property type="status" value="ALT_SEQ"/>
    <property type="molecule type" value="Genomic_DNA"/>
</dbReference>
<dbReference type="EMBL" id="AP014963">
    <property type="protein sequence ID" value="BAT00346.1"/>
    <property type="molecule type" value="Genomic_DNA"/>
</dbReference>
<dbReference type="EMBL" id="CM000144">
    <property type="protein sequence ID" value="EAZ38930.1"/>
    <property type="molecule type" value="Genomic_DNA"/>
</dbReference>
<dbReference type="SMR" id="A3BH91"/>
<dbReference type="PaxDb" id="39947-A3BH91"/>
<dbReference type="EnsemblPlants" id="Os07t0183700-00">
    <property type="protein sequence ID" value="Os07t0183700-00"/>
    <property type="gene ID" value="Os07g0183700"/>
</dbReference>
<dbReference type="Gramene" id="Os07t0183700-00">
    <property type="protein sequence ID" value="Os07t0183700-00"/>
    <property type="gene ID" value="Os07g0183700"/>
</dbReference>
<dbReference type="eggNOG" id="ENOG502QVP0">
    <property type="taxonomic scope" value="Eukaryota"/>
</dbReference>
<dbReference type="HOGENOM" id="CLU_037573_0_0_1"/>
<dbReference type="InParanoid" id="A3BH91"/>
<dbReference type="OMA" id="GHEYTSV"/>
<dbReference type="Proteomes" id="UP000000763">
    <property type="component" value="Chromosome 7"/>
</dbReference>
<dbReference type="Proteomes" id="UP000007752">
    <property type="component" value="Chromosome 7"/>
</dbReference>
<dbReference type="Proteomes" id="UP000059680">
    <property type="component" value="Chromosome 7"/>
</dbReference>
<dbReference type="GO" id="GO:0005634">
    <property type="term" value="C:nucleus"/>
    <property type="evidence" value="ECO:0007669"/>
    <property type="project" value="UniProtKB-SubCell"/>
</dbReference>
<dbReference type="GO" id="GO:0003677">
    <property type="term" value="F:DNA binding"/>
    <property type="evidence" value="ECO:0007669"/>
    <property type="project" value="UniProtKB-KW"/>
</dbReference>
<dbReference type="GO" id="GO:0006355">
    <property type="term" value="P:regulation of DNA-templated transcription"/>
    <property type="evidence" value="ECO:0007669"/>
    <property type="project" value="InterPro"/>
</dbReference>
<dbReference type="GO" id="GO:0009725">
    <property type="term" value="P:response to hormone"/>
    <property type="evidence" value="ECO:0007669"/>
    <property type="project" value="InterPro"/>
</dbReference>
<dbReference type="CDD" id="cd10017">
    <property type="entry name" value="B3_DNA"/>
    <property type="match status" value="1"/>
</dbReference>
<dbReference type="Gene3D" id="2.40.330.10">
    <property type="entry name" value="DNA-binding pseudobarrel domain"/>
    <property type="match status" value="1"/>
</dbReference>
<dbReference type="InterPro" id="IPR044835">
    <property type="entry name" value="ARF_plant"/>
</dbReference>
<dbReference type="InterPro" id="IPR003340">
    <property type="entry name" value="B3_DNA-bd"/>
</dbReference>
<dbReference type="InterPro" id="IPR015300">
    <property type="entry name" value="DNA-bd_pseudobarrel_sf"/>
</dbReference>
<dbReference type="PANTHER" id="PTHR31384:SF94">
    <property type="entry name" value="AUXIN RESPONSE FACTOR 17"/>
    <property type="match status" value="1"/>
</dbReference>
<dbReference type="PANTHER" id="PTHR31384">
    <property type="entry name" value="AUXIN RESPONSE FACTOR 4-RELATED"/>
    <property type="match status" value="1"/>
</dbReference>
<dbReference type="Pfam" id="PF02362">
    <property type="entry name" value="B3"/>
    <property type="match status" value="1"/>
</dbReference>
<dbReference type="SMART" id="SM01019">
    <property type="entry name" value="B3"/>
    <property type="match status" value="1"/>
</dbReference>
<dbReference type="SUPFAM" id="SSF101936">
    <property type="entry name" value="DNA-binding pseudobarrel domain"/>
    <property type="match status" value="1"/>
</dbReference>
<dbReference type="PROSITE" id="PS50863">
    <property type="entry name" value="B3"/>
    <property type="match status" value="1"/>
</dbReference>
<name>Y7838_ORYSJ</name>
<evidence type="ECO:0000255" key="1">
    <source>
        <dbReference type="PROSITE-ProRule" id="PRU00326"/>
    </source>
</evidence>
<evidence type="ECO:0000256" key="2">
    <source>
        <dbReference type="SAM" id="MobiDB-lite"/>
    </source>
</evidence>
<evidence type="ECO:0000305" key="3"/>
<sequence length="524" mass="56140">MPLPSCRRREQRPRQSCFQNPECHLRLRARQQRPQESAVQSTLSSSIYFSDHFVLTPPPFQITPTSIQNSTWLPIPTSPAVAAPPLPRCLGGVDGEGAPCAPPPSPIPAGPASSTVSAASSAPATRDYLGGITGHRLGQEDDSGGHEYTSVSGIHVPSSSGVAFVSFGQCPQEVISTDLCLGLGPIAATAPLQPPPPPAAAAAAGSPSATTPEPGHGEATPTTSSSAQFQTQAQQVTRDMWMACAAPKSGRLPTVGSLVYYFPDGHAEQCLSRPQEPLPGRIFLCKVTDVRLGAAATNEALATISLVPIAADDHAFQLQAPADPDPAPAQSQSLVSFVKPLTYTDVTKNRFMVPKDDAAAGVLPHIQLNDDVPLRIKDLSGKEWAFNYTWKAHTRMFRNGWMEFSNANGLVTGDNAVFMRRGNGEMFMAVRRTRNRPAPFSVEEVIEAVWRAARREPFEVSYCLRQDGDEFVVPRDIVDDGLRARFAPGMAVNFVWAVEDGKLPTIGPQGEVISIENYATSIGA</sequence>
<gene>
    <name type="ordered locus">Os07g0183700</name>
    <name type="ordered locus">Os07g0183866</name>
    <name type="ordered locus">Os07g0183932</name>
    <name type="ordered locus">LOC_Os07g08600</name>
    <name type="ORF">OJ1046_F10.111</name>
    <name type="ORF">OJ1506_G02.28</name>
    <name type="ORF">OsJ_23349</name>
</gene>